<feature type="transit peptide" description="Mitochondrion" evidence="2">
    <location>
        <begin position="1"/>
        <end position="25"/>
    </location>
</feature>
<feature type="chain" id="PRO_0000006181" description="Cytochrome c oxidase subunit 8A, mitochondrial">
    <location>
        <begin position="26"/>
        <end position="69"/>
    </location>
</feature>
<feature type="topological domain" description="Mitochondrial matrix" evidence="2">
    <location>
        <begin position="26"/>
        <end position="36"/>
    </location>
</feature>
<feature type="transmembrane region" description="Helical" evidence="1">
    <location>
        <begin position="37"/>
        <end position="60"/>
    </location>
</feature>
<feature type="topological domain" description="Mitochondrial intermembrane" evidence="2">
    <location>
        <begin position="61"/>
        <end position="69"/>
    </location>
</feature>
<feature type="short sequence motif" description="SIFI-degron" evidence="2">
    <location>
        <begin position="2"/>
        <end position="19"/>
    </location>
</feature>
<organism>
    <name type="scientific">Ateles belzebuth</name>
    <name type="common">White-bellied spider monkey</name>
    <dbReference type="NCBI Taxonomy" id="9507"/>
    <lineage>
        <taxon>Eukaryota</taxon>
        <taxon>Metazoa</taxon>
        <taxon>Chordata</taxon>
        <taxon>Craniata</taxon>
        <taxon>Vertebrata</taxon>
        <taxon>Euteleostomi</taxon>
        <taxon>Mammalia</taxon>
        <taxon>Eutheria</taxon>
        <taxon>Euarchontoglires</taxon>
        <taxon>Primates</taxon>
        <taxon>Haplorrhini</taxon>
        <taxon>Platyrrhini</taxon>
        <taxon>Atelidae</taxon>
        <taxon>Atelinae</taxon>
        <taxon>Ateles</taxon>
    </lineage>
</organism>
<sequence length="69" mass="7651">MYVVTPLLLRGLTGSARRLPVPRAQVHSMPPEQKLGVLELAIGFTSCMVTFLLPAGWIMSHLESYKKRG</sequence>
<name>COX8A_ATEBE</name>
<reference key="1">
    <citation type="journal article" date="2003" name="Proc. Natl. Acad. Sci. U.S.A.">
        <title>Adaptive evolution of cytochrome c oxidase subunit VIII in anthropoid primates.</title>
        <authorList>
            <person name="Goldberg A."/>
            <person name="Wildman D.E."/>
            <person name="Schmidt T.R."/>
            <person name="Huttemann M."/>
            <person name="Goodman M."/>
            <person name="Weiss M.L."/>
            <person name="Grossman L.I."/>
        </authorList>
    </citation>
    <scope>NUCLEOTIDE SEQUENCE [MRNA]</scope>
</reference>
<keyword id="KW-0472">Membrane</keyword>
<keyword id="KW-0496">Mitochondrion</keyword>
<keyword id="KW-0999">Mitochondrion inner membrane</keyword>
<keyword id="KW-0809">Transit peptide</keyword>
<keyword id="KW-0812">Transmembrane</keyword>
<keyword id="KW-1133">Transmembrane helix</keyword>
<keyword id="KW-0832">Ubl conjugation</keyword>
<evidence type="ECO:0000250" key="1">
    <source>
        <dbReference type="UniProtKB" id="P10175"/>
    </source>
</evidence>
<evidence type="ECO:0000250" key="2">
    <source>
        <dbReference type="UniProtKB" id="P10176"/>
    </source>
</evidence>
<evidence type="ECO:0000305" key="3"/>
<gene>
    <name type="primary">COX8A</name>
    <name type="synonym">COX8</name>
    <name type="synonym">COX8L</name>
</gene>
<comment type="function">
    <text evidence="1">Component of the cytochrome c oxidase, the last enzyme in the mitochondrial electron transport chain which drives oxidative phosphorylation. The respiratory chain contains 3 multisubunit complexes succinate dehydrogenase (complex II, CII), ubiquinol-cytochrome c oxidoreductase (cytochrome b-c1 complex, complex III, CIII) and cytochrome c oxidase (complex IV, CIV), that cooperate to transfer electrons derived from NADH and succinate to molecular oxygen, creating an electrochemical gradient over the inner membrane that drives transmembrane transport and the ATP synthase. Cytochrome c oxidase is the component of the respiratory chain that catalyzes the reduction of oxygen to water. Electrons originating from reduced cytochrome c in the intermembrane space (IMS) are transferred via the dinuclear copper A center (CU(A)) of subunit 2 and heme A of subunit 1 to the active site in subunit 1, a binuclear center (BNC) formed by heme A3 and copper B (CU(B)). The BNC reduces molecular oxygen to 2 water molecules using 4 electrons from cytochrome c in the IMS and 4 protons from the mitochondrial matrix.</text>
</comment>
<comment type="pathway">
    <text evidence="1">Energy metabolism; oxidative phosphorylation.</text>
</comment>
<comment type="subunit">
    <text evidence="2">Component of the cytochrome c oxidase (complex IV, CIV), a multisubunit enzyme composed of 14 subunits. The complex is composed of a catalytic core of 3 subunits MT-CO1, MT-CO2 and MT-CO3, encoded in the mitochondrial DNA, and 11 supernumerary subunits COX4I, COX5A, COX5B, COX6A, COX6B, COX6C, COX7A, COX7B, COX7C, COX8 and NDUFA4, which are encoded in the nuclear genome. The complex exists as a monomer or a dimer and forms supercomplexes (SCs) in the inner mitochondrial membrane with NADH-ubiquinone oxidoreductase (complex I, CI) and ubiquinol-cytochrome c oxidoreductase (cytochrome b-c1 complex, complex III, CIII), resulting in different assemblies (supercomplex SCI(1)III(2)IV(1) and megacomplex MCI(2)III(2)IV(2)).</text>
</comment>
<comment type="subcellular location">
    <subcellularLocation>
        <location evidence="2">Mitochondrion inner membrane</location>
        <topology evidence="2">Single-pass membrane protein</topology>
    </subcellularLocation>
</comment>
<comment type="PTM">
    <text evidence="2">In response to mitochondrial stress, the precursor protein is ubiquitinated by the SIFI complex in the cytoplasm before mitochondrial import, leading to its degradation. Within the SIFI complex, UBR4 initiates ubiquitin chain that are further elongated or branched by KCMF1.</text>
</comment>
<comment type="similarity">
    <text evidence="3">Belongs to the cytochrome c oxidase VIII family.</text>
</comment>
<proteinExistence type="inferred from homology"/>
<dbReference type="EMBL" id="AY254820">
    <property type="protein sequence ID" value="AAP32251.1"/>
    <property type="molecule type" value="mRNA"/>
</dbReference>
<dbReference type="SMR" id="Q863G6"/>
<dbReference type="UniPathway" id="UPA00705"/>
<dbReference type="GO" id="GO:0005743">
    <property type="term" value="C:mitochondrial inner membrane"/>
    <property type="evidence" value="ECO:0007669"/>
    <property type="project" value="UniProtKB-SubCell"/>
</dbReference>
<dbReference type="GO" id="GO:0045277">
    <property type="term" value="C:respiratory chain complex IV"/>
    <property type="evidence" value="ECO:0007669"/>
    <property type="project" value="InterPro"/>
</dbReference>
<dbReference type="GO" id="GO:0006123">
    <property type="term" value="P:mitochondrial electron transport, cytochrome c to oxygen"/>
    <property type="evidence" value="ECO:0007669"/>
    <property type="project" value="InterPro"/>
</dbReference>
<dbReference type="CDD" id="cd00930">
    <property type="entry name" value="Cyt_c_Oxidase_VIII"/>
    <property type="match status" value="1"/>
</dbReference>
<dbReference type="FunFam" id="4.10.81.10:FF:000001">
    <property type="entry name" value="Cytochrome c oxidase subunit 8B, mitochondrial"/>
    <property type="match status" value="1"/>
</dbReference>
<dbReference type="Gene3D" id="4.10.81.10">
    <property type="entry name" value="Cytochrome c oxidase, subunit 8"/>
    <property type="match status" value="1"/>
</dbReference>
<dbReference type="InterPro" id="IPR003205">
    <property type="entry name" value="Cyt_c_oxidase_su8"/>
</dbReference>
<dbReference type="InterPro" id="IPR036548">
    <property type="entry name" value="Cyt_c_oxidase_su8_sf"/>
</dbReference>
<dbReference type="PANTHER" id="PTHR16717">
    <property type="entry name" value="CYTOCHROME C OXIDASE POLYPEPTIDE VIII"/>
    <property type="match status" value="1"/>
</dbReference>
<dbReference type="PANTHER" id="PTHR16717:SF1">
    <property type="entry name" value="CYTOCHROME C OXIDASE SUBUNIT 8A, MITOCHONDRIAL"/>
    <property type="match status" value="1"/>
</dbReference>
<dbReference type="Pfam" id="PF02285">
    <property type="entry name" value="COX8"/>
    <property type="match status" value="1"/>
</dbReference>
<dbReference type="SUPFAM" id="SSF81431">
    <property type="entry name" value="Mitochondrial cytochrome c oxidase subunit VIIIb (aka IX)"/>
    <property type="match status" value="1"/>
</dbReference>
<protein>
    <recommendedName>
        <fullName>Cytochrome c oxidase subunit 8A, mitochondrial</fullName>
    </recommendedName>
    <alternativeName>
        <fullName>Cytochrome c oxidase polypeptide VIII-liver</fullName>
    </alternativeName>
    <alternativeName>
        <fullName>Cytochrome c oxidase subunit 8-2</fullName>
    </alternativeName>
</protein>
<accession>Q863G6</accession>